<sequence>MGDPKRQRKKYETPSHPWIKERLDRERVLKRNYALKNKKELWRHETQLKEFRRRARRLLAARGKQAEIERQQLLQRLYRLGLLPADAVLDDVLSLTVEDVLERRLQTIVYRKGLARTMKQARQLIVHGHIEVNGQVIRSPGYLVLREEEDTITYAKGSPFAKEGHPERMVIEQAKQGGEA</sequence>
<protein>
    <recommendedName>
        <fullName evidence="1">Small ribosomal subunit protein uS4</fullName>
    </recommendedName>
    <alternativeName>
        <fullName evidence="3">30S ribosomal protein S4</fullName>
    </alternativeName>
</protein>
<accession>Q5JJF2</accession>
<keyword id="KW-0002">3D-structure</keyword>
<keyword id="KW-1185">Reference proteome</keyword>
<keyword id="KW-0687">Ribonucleoprotein</keyword>
<keyword id="KW-0689">Ribosomal protein</keyword>
<keyword id="KW-0694">RNA-binding</keyword>
<keyword id="KW-0699">rRNA-binding</keyword>
<reference key="1">
    <citation type="journal article" date="2005" name="Genome Res.">
        <title>Complete genome sequence of the hyperthermophilic archaeon Thermococcus kodakaraensis KOD1 and comparison with Pyrococcus genomes.</title>
        <authorList>
            <person name="Fukui T."/>
            <person name="Atomi H."/>
            <person name="Kanai T."/>
            <person name="Matsumi R."/>
            <person name="Fujiwara S."/>
            <person name="Imanaka T."/>
        </authorList>
    </citation>
    <scope>NUCLEOTIDE SEQUENCE [LARGE SCALE GENOMIC DNA]</scope>
    <source>
        <strain>ATCC BAA-918 / JCM 12380 / KOD1</strain>
    </source>
</reference>
<reference evidence="4 5 6" key="2">
    <citation type="journal article" date="2020" name="Nature">
        <title>Dynamic RNA acetylation revealed by quantitative cross-evolutionary mapping.</title>
        <authorList>
            <person name="Sas-Chen A."/>
            <person name="Thomas J.M."/>
            <person name="Matzov D."/>
            <person name="Taoka M."/>
            <person name="Nance K.D."/>
            <person name="Nir R."/>
            <person name="Bryson K.M."/>
            <person name="Shachar R."/>
            <person name="Liman G.L.S."/>
            <person name="Burkhart B.W."/>
            <person name="Gamage S.T."/>
            <person name="Nobe Y."/>
            <person name="Briney C.A."/>
            <person name="Levy M.J."/>
            <person name="Fuchs R.T."/>
            <person name="Robb G.B."/>
            <person name="Hartmann J."/>
            <person name="Sharma S."/>
            <person name="Lin Q."/>
            <person name="Florens L."/>
            <person name="Washburn M.P."/>
            <person name="Isobe T."/>
            <person name="Santangelo T.J."/>
            <person name="Shalev-Benami M."/>
            <person name="Meier J.L."/>
            <person name="Schwartz S."/>
        </authorList>
    </citation>
    <scope>STRUCTURE BY ELECTRON MICROSCOPY (2.55 ANGSTROMS) IN 70S RIBOSOME</scope>
    <scope>SUBUNIT</scope>
    <source>
        <strain>ATCC BAA-918 / TS559</strain>
    </source>
</reference>
<comment type="function">
    <text evidence="1">One of the primary rRNA binding proteins, it binds directly to 16S rRNA where it nucleates assembly of the body of the 30S subunit.</text>
</comment>
<comment type="function">
    <text evidence="1">With S5 and S12 plays an important role in translational accuracy.</text>
</comment>
<comment type="subunit">
    <text evidence="1 2">Part of the 30S ribosomal subunit (PubMed:32555463). Contacts protein S5. The interaction surface between S4 and S5 is involved in control of translational fidelity.</text>
</comment>
<comment type="similarity">
    <text evidence="1">Belongs to the universal ribosomal protein uS4 family.</text>
</comment>
<gene>
    <name evidence="1" type="primary">rps4</name>
    <name type="ordered locus">TK1505</name>
</gene>
<organism>
    <name type="scientific">Thermococcus kodakarensis (strain ATCC BAA-918 / JCM 12380 / KOD1)</name>
    <name type="common">Pyrococcus kodakaraensis (strain KOD1)</name>
    <dbReference type="NCBI Taxonomy" id="69014"/>
    <lineage>
        <taxon>Archaea</taxon>
        <taxon>Methanobacteriati</taxon>
        <taxon>Methanobacteriota</taxon>
        <taxon>Thermococci</taxon>
        <taxon>Thermococcales</taxon>
        <taxon>Thermococcaceae</taxon>
        <taxon>Thermococcus</taxon>
    </lineage>
</organism>
<proteinExistence type="evidence at protein level"/>
<dbReference type="EMBL" id="AP006878">
    <property type="protein sequence ID" value="BAD85694.1"/>
    <property type="molecule type" value="Genomic_DNA"/>
</dbReference>
<dbReference type="RefSeq" id="WP_011250456.1">
    <property type="nucleotide sequence ID" value="NC_006624.1"/>
</dbReference>
<dbReference type="PDB" id="6SKF">
    <property type="method" value="EM"/>
    <property type="resolution" value="2.95 A"/>
    <property type="chains" value="Ae=1-180"/>
</dbReference>
<dbReference type="PDB" id="6SKG">
    <property type="method" value="EM"/>
    <property type="resolution" value="2.65 A"/>
    <property type="chains" value="Ae=1-180"/>
</dbReference>
<dbReference type="PDB" id="6TH6">
    <property type="method" value="EM"/>
    <property type="resolution" value="2.55 A"/>
    <property type="chains" value="Ae=1-180"/>
</dbReference>
<dbReference type="PDBsum" id="6SKF"/>
<dbReference type="PDBsum" id="6SKG"/>
<dbReference type="PDBsum" id="6TH6"/>
<dbReference type="EMDB" id="EMD-10223"/>
<dbReference type="EMDB" id="EMD-10224"/>
<dbReference type="EMDB" id="EMD-10503"/>
<dbReference type="SMR" id="Q5JJF2"/>
<dbReference type="FunCoup" id="Q5JJF2">
    <property type="interactions" value="168"/>
</dbReference>
<dbReference type="IntAct" id="Q5JJF2">
    <property type="interactions" value="1"/>
</dbReference>
<dbReference type="MINT" id="Q5JJF2"/>
<dbReference type="STRING" id="69014.TK1505"/>
<dbReference type="EnsemblBacteria" id="BAD85694">
    <property type="protein sequence ID" value="BAD85694"/>
    <property type="gene ID" value="TK1505"/>
</dbReference>
<dbReference type="GeneID" id="78448032"/>
<dbReference type="KEGG" id="tko:TK1505"/>
<dbReference type="PATRIC" id="fig|69014.16.peg.1465"/>
<dbReference type="eggNOG" id="arCOG04239">
    <property type="taxonomic scope" value="Archaea"/>
</dbReference>
<dbReference type="HOGENOM" id="CLU_089738_1_1_2"/>
<dbReference type="InParanoid" id="Q5JJF2"/>
<dbReference type="OrthoDB" id="10429at2157"/>
<dbReference type="PhylomeDB" id="Q5JJF2"/>
<dbReference type="Proteomes" id="UP000000536">
    <property type="component" value="Chromosome"/>
</dbReference>
<dbReference type="GO" id="GO:0015935">
    <property type="term" value="C:small ribosomal subunit"/>
    <property type="evidence" value="ECO:0000318"/>
    <property type="project" value="GO_Central"/>
</dbReference>
<dbReference type="GO" id="GO:0019843">
    <property type="term" value="F:rRNA binding"/>
    <property type="evidence" value="ECO:0000318"/>
    <property type="project" value="GO_Central"/>
</dbReference>
<dbReference type="GO" id="GO:0003735">
    <property type="term" value="F:structural constituent of ribosome"/>
    <property type="evidence" value="ECO:0000318"/>
    <property type="project" value="GO_Central"/>
</dbReference>
<dbReference type="GO" id="GO:0042274">
    <property type="term" value="P:ribosomal small subunit biogenesis"/>
    <property type="evidence" value="ECO:0000318"/>
    <property type="project" value="GO_Central"/>
</dbReference>
<dbReference type="GO" id="GO:0006412">
    <property type="term" value="P:translation"/>
    <property type="evidence" value="ECO:0007669"/>
    <property type="project" value="UniProtKB-UniRule"/>
</dbReference>
<dbReference type="CDD" id="cd00165">
    <property type="entry name" value="S4"/>
    <property type="match status" value="1"/>
</dbReference>
<dbReference type="FunFam" id="3.10.290.10:FF:000026">
    <property type="entry name" value="30S ribosomal protein S4"/>
    <property type="match status" value="1"/>
</dbReference>
<dbReference type="Gene3D" id="3.10.290.10">
    <property type="entry name" value="RNA-binding S4 domain"/>
    <property type="match status" value="1"/>
</dbReference>
<dbReference type="HAMAP" id="MF_01306_A">
    <property type="entry name" value="Ribosomal_uS4_A"/>
    <property type="match status" value="1"/>
</dbReference>
<dbReference type="InterPro" id="IPR022801">
    <property type="entry name" value="Ribosomal_uS4"/>
</dbReference>
<dbReference type="InterPro" id="IPR022802">
    <property type="entry name" value="Ribosomal_uS4_arc"/>
</dbReference>
<dbReference type="InterPro" id="IPR018079">
    <property type="entry name" value="Ribosomal_uS4_CS"/>
</dbReference>
<dbReference type="InterPro" id="IPR005710">
    <property type="entry name" value="Ribosomal_uS4_euk/arc"/>
</dbReference>
<dbReference type="InterPro" id="IPR001912">
    <property type="entry name" value="Ribosomal_uS4_N"/>
</dbReference>
<dbReference type="InterPro" id="IPR002942">
    <property type="entry name" value="S4_RNA-bd"/>
</dbReference>
<dbReference type="InterPro" id="IPR036986">
    <property type="entry name" value="S4_RNA-bd_sf"/>
</dbReference>
<dbReference type="NCBIfam" id="NF003139">
    <property type="entry name" value="PRK04051.1"/>
    <property type="match status" value="1"/>
</dbReference>
<dbReference type="NCBIfam" id="TIGR01018">
    <property type="entry name" value="uS4_arch"/>
    <property type="match status" value="1"/>
</dbReference>
<dbReference type="PANTHER" id="PTHR11831">
    <property type="entry name" value="30S 40S RIBOSOMAL PROTEIN"/>
    <property type="match status" value="1"/>
</dbReference>
<dbReference type="PANTHER" id="PTHR11831:SF5">
    <property type="entry name" value="40S RIBOSOMAL PROTEIN S9"/>
    <property type="match status" value="1"/>
</dbReference>
<dbReference type="Pfam" id="PF00163">
    <property type="entry name" value="Ribosomal_S4"/>
    <property type="match status" value="1"/>
</dbReference>
<dbReference type="Pfam" id="PF01479">
    <property type="entry name" value="S4"/>
    <property type="match status" value="1"/>
</dbReference>
<dbReference type="SMART" id="SM01390">
    <property type="entry name" value="Ribosomal_S4"/>
    <property type="match status" value="1"/>
</dbReference>
<dbReference type="SMART" id="SM00363">
    <property type="entry name" value="S4"/>
    <property type="match status" value="1"/>
</dbReference>
<dbReference type="SUPFAM" id="SSF55174">
    <property type="entry name" value="Alpha-L RNA-binding motif"/>
    <property type="match status" value="1"/>
</dbReference>
<dbReference type="PROSITE" id="PS00632">
    <property type="entry name" value="RIBOSOMAL_S4"/>
    <property type="match status" value="1"/>
</dbReference>
<dbReference type="PROSITE" id="PS50889">
    <property type="entry name" value="S4"/>
    <property type="match status" value="1"/>
</dbReference>
<name>RS4_THEKO</name>
<feature type="chain" id="PRO_0000132519" description="Small ribosomal subunit protein uS4">
    <location>
        <begin position="1"/>
        <end position="180"/>
    </location>
</feature>
<feature type="domain" description="S4 RNA-binding" evidence="1">
    <location>
        <begin position="103"/>
        <end position="165"/>
    </location>
</feature>
<evidence type="ECO:0000255" key="1">
    <source>
        <dbReference type="HAMAP-Rule" id="MF_01306"/>
    </source>
</evidence>
<evidence type="ECO:0000269" key="2">
    <source>
    </source>
</evidence>
<evidence type="ECO:0000305" key="3"/>
<evidence type="ECO:0007744" key="4">
    <source>
        <dbReference type="PDB" id="6SKF"/>
    </source>
</evidence>
<evidence type="ECO:0007744" key="5">
    <source>
        <dbReference type="PDB" id="6SKG"/>
    </source>
</evidence>
<evidence type="ECO:0007744" key="6">
    <source>
        <dbReference type="PDB" id="6TH6"/>
    </source>
</evidence>